<keyword id="KW-0028">Amino-acid biosynthesis</keyword>
<keyword id="KW-0963">Cytoplasm</keyword>
<keyword id="KW-0220">Diaminopimelate biosynthesis</keyword>
<keyword id="KW-0456">Lyase</keyword>
<keyword id="KW-0457">Lysine biosynthesis</keyword>
<keyword id="KW-0704">Schiff base</keyword>
<proteinExistence type="inferred from homology"/>
<reference key="1">
    <citation type="journal article" date="2011" name="MBio">
        <title>Novel metabolic attributes of the genus Cyanothece, comprising a group of unicellular nitrogen-fixing Cyanobacteria.</title>
        <authorList>
            <person name="Bandyopadhyay A."/>
            <person name="Elvitigala T."/>
            <person name="Welsh E."/>
            <person name="Stockel J."/>
            <person name="Liberton M."/>
            <person name="Min H."/>
            <person name="Sherman L.A."/>
            <person name="Pakrasi H.B."/>
        </authorList>
    </citation>
    <scope>NUCLEOTIDE SEQUENCE [LARGE SCALE GENOMIC DNA]</scope>
    <source>
        <strain>PCC 7425 / ATCC 29141</strain>
    </source>
</reference>
<gene>
    <name evidence="1" type="primary">dapA</name>
    <name type="ordered locus">Cyan7425_4361</name>
</gene>
<protein>
    <recommendedName>
        <fullName evidence="1">4-hydroxy-tetrahydrodipicolinate synthase</fullName>
        <shortName evidence="1">HTPA synthase</shortName>
        <ecNumber evidence="1">4.3.3.7</ecNumber>
    </recommendedName>
</protein>
<dbReference type="EC" id="4.3.3.7" evidence="1"/>
<dbReference type="EMBL" id="CP001344">
    <property type="protein sequence ID" value="ACL46671.1"/>
    <property type="molecule type" value="Genomic_DNA"/>
</dbReference>
<dbReference type="SMR" id="B8HYL7"/>
<dbReference type="STRING" id="395961.Cyan7425_4361"/>
<dbReference type="KEGG" id="cyn:Cyan7425_4361"/>
<dbReference type="eggNOG" id="COG0329">
    <property type="taxonomic scope" value="Bacteria"/>
</dbReference>
<dbReference type="HOGENOM" id="CLU_049343_7_1_3"/>
<dbReference type="OrthoDB" id="9782828at2"/>
<dbReference type="UniPathway" id="UPA00034">
    <property type="reaction ID" value="UER00017"/>
</dbReference>
<dbReference type="GO" id="GO:0005829">
    <property type="term" value="C:cytosol"/>
    <property type="evidence" value="ECO:0007669"/>
    <property type="project" value="TreeGrafter"/>
</dbReference>
<dbReference type="GO" id="GO:0008840">
    <property type="term" value="F:4-hydroxy-tetrahydrodipicolinate synthase activity"/>
    <property type="evidence" value="ECO:0007669"/>
    <property type="project" value="UniProtKB-UniRule"/>
</dbReference>
<dbReference type="GO" id="GO:0019877">
    <property type="term" value="P:diaminopimelate biosynthetic process"/>
    <property type="evidence" value="ECO:0007669"/>
    <property type="project" value="UniProtKB-UniRule"/>
</dbReference>
<dbReference type="GO" id="GO:0009089">
    <property type="term" value="P:lysine biosynthetic process via diaminopimelate"/>
    <property type="evidence" value="ECO:0007669"/>
    <property type="project" value="UniProtKB-UniRule"/>
</dbReference>
<dbReference type="CDD" id="cd00950">
    <property type="entry name" value="DHDPS"/>
    <property type="match status" value="1"/>
</dbReference>
<dbReference type="Gene3D" id="3.20.20.70">
    <property type="entry name" value="Aldolase class I"/>
    <property type="match status" value="1"/>
</dbReference>
<dbReference type="HAMAP" id="MF_00418">
    <property type="entry name" value="DapA"/>
    <property type="match status" value="1"/>
</dbReference>
<dbReference type="InterPro" id="IPR013785">
    <property type="entry name" value="Aldolase_TIM"/>
</dbReference>
<dbReference type="InterPro" id="IPR005263">
    <property type="entry name" value="DapA"/>
</dbReference>
<dbReference type="InterPro" id="IPR002220">
    <property type="entry name" value="DapA-like"/>
</dbReference>
<dbReference type="InterPro" id="IPR020625">
    <property type="entry name" value="Schiff_base-form_aldolases_AS"/>
</dbReference>
<dbReference type="InterPro" id="IPR020624">
    <property type="entry name" value="Schiff_base-form_aldolases_CS"/>
</dbReference>
<dbReference type="NCBIfam" id="TIGR00674">
    <property type="entry name" value="dapA"/>
    <property type="match status" value="1"/>
</dbReference>
<dbReference type="PANTHER" id="PTHR12128:SF66">
    <property type="entry name" value="4-HYDROXY-2-OXOGLUTARATE ALDOLASE, MITOCHONDRIAL"/>
    <property type="match status" value="1"/>
</dbReference>
<dbReference type="PANTHER" id="PTHR12128">
    <property type="entry name" value="DIHYDRODIPICOLINATE SYNTHASE"/>
    <property type="match status" value="1"/>
</dbReference>
<dbReference type="Pfam" id="PF00701">
    <property type="entry name" value="DHDPS"/>
    <property type="match status" value="1"/>
</dbReference>
<dbReference type="PIRSF" id="PIRSF001365">
    <property type="entry name" value="DHDPS"/>
    <property type="match status" value="1"/>
</dbReference>
<dbReference type="PRINTS" id="PR00146">
    <property type="entry name" value="DHPICSNTHASE"/>
</dbReference>
<dbReference type="SMART" id="SM01130">
    <property type="entry name" value="DHDPS"/>
    <property type="match status" value="1"/>
</dbReference>
<dbReference type="SUPFAM" id="SSF51569">
    <property type="entry name" value="Aldolase"/>
    <property type="match status" value="1"/>
</dbReference>
<dbReference type="PROSITE" id="PS00665">
    <property type="entry name" value="DHDPS_1"/>
    <property type="match status" value="1"/>
</dbReference>
<dbReference type="PROSITE" id="PS00666">
    <property type="entry name" value="DHDPS_2"/>
    <property type="match status" value="1"/>
</dbReference>
<accession>B8HYL7</accession>
<sequence length="294" mass="31372">MTNFGRVITAMVTPFTPEGEVNYSVAEQLAGHLVEHGSEGLVICGTTGESPTLSWDEEFQLFRTVQQAVAGKAKIIAGTGSNSTHEAIAASQKAAQLGLDGALLVVPYYNKPPQEGLYQHFRAIAQAVPEFPLMLYNIPGRTGQNLLPETIARLAELPNIVAIKEASGNLDQASQIRQLTPTEFAIYSGDDSLTLPLLAVGGVGVVSVASHLVGDQLQQMIRAFTAGQVDVAQTIHTQLLPLFKALFVTTNPIPIKAALQLQGWAVGNLRLPLVSADAATQEMLRSLLQSLNLL</sequence>
<comment type="function">
    <text evidence="1">Catalyzes the condensation of (S)-aspartate-beta-semialdehyde [(S)-ASA] and pyruvate to 4-hydroxy-tetrahydrodipicolinate (HTPA).</text>
</comment>
<comment type="catalytic activity">
    <reaction evidence="1">
        <text>L-aspartate 4-semialdehyde + pyruvate = (2S,4S)-4-hydroxy-2,3,4,5-tetrahydrodipicolinate + H2O + H(+)</text>
        <dbReference type="Rhea" id="RHEA:34171"/>
        <dbReference type="ChEBI" id="CHEBI:15361"/>
        <dbReference type="ChEBI" id="CHEBI:15377"/>
        <dbReference type="ChEBI" id="CHEBI:15378"/>
        <dbReference type="ChEBI" id="CHEBI:67139"/>
        <dbReference type="ChEBI" id="CHEBI:537519"/>
        <dbReference type="EC" id="4.3.3.7"/>
    </reaction>
</comment>
<comment type="pathway">
    <text evidence="1">Amino-acid biosynthesis; L-lysine biosynthesis via DAP pathway; (S)-tetrahydrodipicolinate from L-aspartate: step 3/4.</text>
</comment>
<comment type="subunit">
    <text evidence="1">Homotetramer; dimer of dimers.</text>
</comment>
<comment type="subcellular location">
    <subcellularLocation>
        <location evidence="1">Cytoplasm</location>
    </subcellularLocation>
</comment>
<comment type="similarity">
    <text evidence="1">Belongs to the DapA family.</text>
</comment>
<comment type="caution">
    <text evidence="2">Was originally thought to be a dihydrodipicolinate synthase (DHDPS), catalyzing the condensation of (S)-aspartate-beta-semialdehyde [(S)-ASA] and pyruvate to dihydrodipicolinate (DHDP). However, it was shown in E.coli that the product of the enzymatic reaction is not dihydrodipicolinate but in fact (4S)-4-hydroxy-2,3,4,5-tetrahydro-(2S)-dipicolinic acid (HTPA), and that the consecutive dehydration reaction leading to DHDP is not spontaneous but catalyzed by DapB.</text>
</comment>
<feature type="chain" id="PRO_1000134864" description="4-hydroxy-tetrahydrodipicolinate synthase">
    <location>
        <begin position="1"/>
        <end position="294"/>
    </location>
</feature>
<feature type="active site" description="Proton donor/acceptor" evidence="1">
    <location>
        <position position="136"/>
    </location>
</feature>
<feature type="active site" description="Schiff-base intermediate with substrate" evidence="1">
    <location>
        <position position="164"/>
    </location>
</feature>
<feature type="binding site" evidence="1">
    <location>
        <position position="47"/>
    </location>
    <ligand>
        <name>pyruvate</name>
        <dbReference type="ChEBI" id="CHEBI:15361"/>
    </ligand>
</feature>
<feature type="binding site" evidence="1">
    <location>
        <position position="206"/>
    </location>
    <ligand>
        <name>pyruvate</name>
        <dbReference type="ChEBI" id="CHEBI:15361"/>
    </ligand>
</feature>
<feature type="site" description="Part of a proton relay during catalysis" evidence="1">
    <location>
        <position position="46"/>
    </location>
</feature>
<feature type="site" description="Part of a proton relay during catalysis" evidence="1">
    <location>
        <position position="109"/>
    </location>
</feature>
<evidence type="ECO:0000255" key="1">
    <source>
        <dbReference type="HAMAP-Rule" id="MF_00418"/>
    </source>
</evidence>
<evidence type="ECO:0000305" key="2"/>
<organism>
    <name type="scientific">Cyanothece sp. (strain PCC 7425 / ATCC 29141)</name>
    <dbReference type="NCBI Taxonomy" id="395961"/>
    <lineage>
        <taxon>Bacteria</taxon>
        <taxon>Bacillati</taxon>
        <taxon>Cyanobacteriota</taxon>
        <taxon>Cyanophyceae</taxon>
        <taxon>Gomontiellales</taxon>
        <taxon>Cyanothecaceae</taxon>
        <taxon>Cyanothece</taxon>
    </lineage>
</organism>
<name>DAPA_CYAP4</name>